<gene>
    <name evidence="1" type="primary">dapB</name>
    <name type="ordered locus">Ecok1_00260</name>
    <name type="ORF">APECO1_1951</name>
</gene>
<comment type="function">
    <text evidence="1">Catalyzes the conversion of 4-hydroxy-tetrahydrodipicolinate (HTPA) to tetrahydrodipicolinate.</text>
</comment>
<comment type="catalytic activity">
    <reaction evidence="1">
        <text>(S)-2,3,4,5-tetrahydrodipicolinate + NAD(+) + H2O = (2S,4S)-4-hydroxy-2,3,4,5-tetrahydrodipicolinate + NADH + H(+)</text>
        <dbReference type="Rhea" id="RHEA:35323"/>
        <dbReference type="ChEBI" id="CHEBI:15377"/>
        <dbReference type="ChEBI" id="CHEBI:15378"/>
        <dbReference type="ChEBI" id="CHEBI:16845"/>
        <dbReference type="ChEBI" id="CHEBI:57540"/>
        <dbReference type="ChEBI" id="CHEBI:57945"/>
        <dbReference type="ChEBI" id="CHEBI:67139"/>
        <dbReference type="EC" id="1.17.1.8"/>
    </reaction>
</comment>
<comment type="catalytic activity">
    <reaction evidence="1">
        <text>(S)-2,3,4,5-tetrahydrodipicolinate + NADP(+) + H2O = (2S,4S)-4-hydroxy-2,3,4,5-tetrahydrodipicolinate + NADPH + H(+)</text>
        <dbReference type="Rhea" id="RHEA:35331"/>
        <dbReference type="ChEBI" id="CHEBI:15377"/>
        <dbReference type="ChEBI" id="CHEBI:15378"/>
        <dbReference type="ChEBI" id="CHEBI:16845"/>
        <dbReference type="ChEBI" id="CHEBI:57783"/>
        <dbReference type="ChEBI" id="CHEBI:58349"/>
        <dbReference type="ChEBI" id="CHEBI:67139"/>
        <dbReference type="EC" id="1.17.1.8"/>
    </reaction>
</comment>
<comment type="pathway">
    <text evidence="1">Amino-acid biosynthesis; L-lysine biosynthesis via DAP pathway; (S)-tetrahydrodipicolinate from L-aspartate: step 4/4.</text>
</comment>
<comment type="subunit">
    <text evidence="1">Homotetramer.</text>
</comment>
<comment type="subcellular location">
    <subcellularLocation>
        <location evidence="1">Cytoplasm</location>
    </subcellularLocation>
</comment>
<comment type="similarity">
    <text evidence="1">Belongs to the DapB family.</text>
</comment>
<comment type="caution">
    <text evidence="2">Was originally thought to be a dihydrodipicolinate reductase (DHDPR), catalyzing the conversion of dihydrodipicolinate to tetrahydrodipicolinate. However, it was shown in E.coli that the substrate of the enzymatic reaction is not dihydrodipicolinate (DHDP) but in fact (2S,4S)-4-hydroxy-2,3,4,5-tetrahydrodipicolinic acid (HTPA), the product released by the DapA-catalyzed reaction.</text>
</comment>
<sequence length="273" mass="28771">MHDANIRVAIAGAGGRMGRQLIQAALALEGVQLGAALEREGSSLLGSDAGELAGAGKTGVTVQSSLDAIKDDFDVFIDFTRPEGTLNHLAFCRQHGKGMVIGTTGFDEAGKQAIRDAAADIAIVFAANFSVGVNVMLKLLEKAAKVMGDYTDIEIIEAHHRHKVDAPSGTALAMGEAIAHALDKDLKDCAVYSREGHTGERVPGTIGFATVRAGDIVGEHTAMFADIGERLEITHKASSRMTFANGAVRSALWLSGKESGLFDMRDVLDLNNL</sequence>
<name>DAPB_ECOK1</name>
<evidence type="ECO:0000255" key="1">
    <source>
        <dbReference type="HAMAP-Rule" id="MF_00102"/>
    </source>
</evidence>
<evidence type="ECO:0000305" key="2"/>
<accession>A1A780</accession>
<feature type="chain" id="PRO_1000008561" description="4-hydroxy-tetrahydrodipicolinate reductase">
    <location>
        <begin position="1"/>
        <end position="273"/>
    </location>
</feature>
<feature type="active site" description="Proton donor/acceptor" evidence="1">
    <location>
        <position position="159"/>
    </location>
</feature>
<feature type="active site" description="Proton donor" evidence="1">
    <location>
        <position position="163"/>
    </location>
</feature>
<feature type="binding site" evidence="1">
    <location>
        <begin position="12"/>
        <end position="17"/>
    </location>
    <ligand>
        <name>NAD(+)</name>
        <dbReference type="ChEBI" id="CHEBI:57540"/>
    </ligand>
</feature>
<feature type="binding site" evidence="1">
    <location>
        <position position="38"/>
    </location>
    <ligand>
        <name>NAD(+)</name>
        <dbReference type="ChEBI" id="CHEBI:57540"/>
    </ligand>
</feature>
<feature type="binding site" evidence="1">
    <location>
        <position position="39"/>
    </location>
    <ligand>
        <name>NADP(+)</name>
        <dbReference type="ChEBI" id="CHEBI:58349"/>
    </ligand>
</feature>
<feature type="binding site" evidence="1">
    <location>
        <begin position="102"/>
        <end position="104"/>
    </location>
    <ligand>
        <name>NAD(+)</name>
        <dbReference type="ChEBI" id="CHEBI:57540"/>
    </ligand>
</feature>
<feature type="binding site" evidence="1">
    <location>
        <begin position="126"/>
        <end position="129"/>
    </location>
    <ligand>
        <name>NAD(+)</name>
        <dbReference type="ChEBI" id="CHEBI:57540"/>
    </ligand>
</feature>
<feature type="binding site" evidence="1">
    <location>
        <position position="160"/>
    </location>
    <ligand>
        <name>(S)-2,3,4,5-tetrahydrodipicolinate</name>
        <dbReference type="ChEBI" id="CHEBI:16845"/>
    </ligand>
</feature>
<feature type="binding site" evidence="1">
    <location>
        <begin position="169"/>
        <end position="170"/>
    </location>
    <ligand>
        <name>(S)-2,3,4,5-tetrahydrodipicolinate</name>
        <dbReference type="ChEBI" id="CHEBI:16845"/>
    </ligand>
</feature>
<dbReference type="EC" id="1.17.1.8" evidence="1"/>
<dbReference type="EMBL" id="CP000468">
    <property type="protein sequence ID" value="ABI99519.1"/>
    <property type="molecule type" value="Genomic_DNA"/>
</dbReference>
<dbReference type="RefSeq" id="WP_000543585.1">
    <property type="nucleotide sequence ID" value="NZ_CADILS010000013.1"/>
</dbReference>
<dbReference type="SMR" id="A1A780"/>
<dbReference type="KEGG" id="ecv:APECO1_1951"/>
<dbReference type="HOGENOM" id="CLU_047479_2_1_6"/>
<dbReference type="UniPathway" id="UPA00034">
    <property type="reaction ID" value="UER00018"/>
</dbReference>
<dbReference type="Proteomes" id="UP000008216">
    <property type="component" value="Chromosome"/>
</dbReference>
<dbReference type="GO" id="GO:0005829">
    <property type="term" value="C:cytosol"/>
    <property type="evidence" value="ECO:0007669"/>
    <property type="project" value="TreeGrafter"/>
</dbReference>
<dbReference type="GO" id="GO:0008839">
    <property type="term" value="F:4-hydroxy-tetrahydrodipicolinate reductase"/>
    <property type="evidence" value="ECO:0007669"/>
    <property type="project" value="UniProtKB-EC"/>
</dbReference>
<dbReference type="GO" id="GO:0051287">
    <property type="term" value="F:NAD binding"/>
    <property type="evidence" value="ECO:0007669"/>
    <property type="project" value="UniProtKB-UniRule"/>
</dbReference>
<dbReference type="GO" id="GO:0050661">
    <property type="term" value="F:NADP binding"/>
    <property type="evidence" value="ECO:0007669"/>
    <property type="project" value="UniProtKB-UniRule"/>
</dbReference>
<dbReference type="GO" id="GO:0016726">
    <property type="term" value="F:oxidoreductase activity, acting on CH or CH2 groups, NAD or NADP as acceptor"/>
    <property type="evidence" value="ECO:0007669"/>
    <property type="project" value="UniProtKB-UniRule"/>
</dbReference>
<dbReference type="GO" id="GO:0019877">
    <property type="term" value="P:diaminopimelate biosynthetic process"/>
    <property type="evidence" value="ECO:0007669"/>
    <property type="project" value="UniProtKB-UniRule"/>
</dbReference>
<dbReference type="GO" id="GO:0009089">
    <property type="term" value="P:lysine biosynthetic process via diaminopimelate"/>
    <property type="evidence" value="ECO:0007669"/>
    <property type="project" value="UniProtKB-UniRule"/>
</dbReference>
<dbReference type="CDD" id="cd02274">
    <property type="entry name" value="DHDPR_N"/>
    <property type="match status" value="1"/>
</dbReference>
<dbReference type="FunFam" id="3.30.360.10:FF:000004">
    <property type="entry name" value="4-hydroxy-tetrahydrodipicolinate reductase"/>
    <property type="match status" value="1"/>
</dbReference>
<dbReference type="FunFam" id="3.40.50.720:FF:000048">
    <property type="entry name" value="4-hydroxy-tetrahydrodipicolinate reductase"/>
    <property type="match status" value="1"/>
</dbReference>
<dbReference type="Gene3D" id="3.30.360.10">
    <property type="entry name" value="Dihydrodipicolinate Reductase, domain 2"/>
    <property type="match status" value="1"/>
</dbReference>
<dbReference type="Gene3D" id="3.40.50.720">
    <property type="entry name" value="NAD(P)-binding Rossmann-like Domain"/>
    <property type="match status" value="1"/>
</dbReference>
<dbReference type="HAMAP" id="MF_00102">
    <property type="entry name" value="DapB"/>
    <property type="match status" value="1"/>
</dbReference>
<dbReference type="InterPro" id="IPR022663">
    <property type="entry name" value="DapB_C"/>
</dbReference>
<dbReference type="InterPro" id="IPR000846">
    <property type="entry name" value="DapB_N"/>
</dbReference>
<dbReference type="InterPro" id="IPR022664">
    <property type="entry name" value="DapB_N_CS"/>
</dbReference>
<dbReference type="InterPro" id="IPR023940">
    <property type="entry name" value="DHDPR_bac"/>
</dbReference>
<dbReference type="InterPro" id="IPR036291">
    <property type="entry name" value="NAD(P)-bd_dom_sf"/>
</dbReference>
<dbReference type="NCBIfam" id="TIGR00036">
    <property type="entry name" value="dapB"/>
    <property type="match status" value="1"/>
</dbReference>
<dbReference type="PANTHER" id="PTHR20836:SF0">
    <property type="entry name" value="4-HYDROXY-TETRAHYDRODIPICOLINATE REDUCTASE 1, CHLOROPLASTIC-RELATED"/>
    <property type="match status" value="1"/>
</dbReference>
<dbReference type="PANTHER" id="PTHR20836">
    <property type="entry name" value="DIHYDRODIPICOLINATE REDUCTASE"/>
    <property type="match status" value="1"/>
</dbReference>
<dbReference type="Pfam" id="PF05173">
    <property type="entry name" value="DapB_C"/>
    <property type="match status" value="1"/>
</dbReference>
<dbReference type="Pfam" id="PF01113">
    <property type="entry name" value="DapB_N"/>
    <property type="match status" value="1"/>
</dbReference>
<dbReference type="PIRSF" id="PIRSF000161">
    <property type="entry name" value="DHPR"/>
    <property type="match status" value="1"/>
</dbReference>
<dbReference type="SUPFAM" id="SSF55347">
    <property type="entry name" value="Glyceraldehyde-3-phosphate dehydrogenase-like, C-terminal domain"/>
    <property type="match status" value="1"/>
</dbReference>
<dbReference type="SUPFAM" id="SSF51735">
    <property type="entry name" value="NAD(P)-binding Rossmann-fold domains"/>
    <property type="match status" value="1"/>
</dbReference>
<dbReference type="PROSITE" id="PS01298">
    <property type="entry name" value="DAPB"/>
    <property type="match status" value="1"/>
</dbReference>
<protein>
    <recommendedName>
        <fullName evidence="1">4-hydroxy-tetrahydrodipicolinate reductase</fullName>
        <shortName evidence="1">HTPA reductase</shortName>
        <ecNumber evidence="1">1.17.1.8</ecNumber>
    </recommendedName>
</protein>
<proteinExistence type="inferred from homology"/>
<keyword id="KW-0028">Amino-acid biosynthesis</keyword>
<keyword id="KW-0963">Cytoplasm</keyword>
<keyword id="KW-0220">Diaminopimelate biosynthesis</keyword>
<keyword id="KW-0457">Lysine biosynthesis</keyword>
<keyword id="KW-0520">NAD</keyword>
<keyword id="KW-0521">NADP</keyword>
<keyword id="KW-0560">Oxidoreductase</keyword>
<keyword id="KW-1185">Reference proteome</keyword>
<reference key="1">
    <citation type="journal article" date="2007" name="J. Bacteriol.">
        <title>The genome sequence of avian pathogenic Escherichia coli strain O1:K1:H7 shares strong similarities with human extraintestinal pathogenic E. coli genomes.</title>
        <authorList>
            <person name="Johnson T.J."/>
            <person name="Kariyawasam S."/>
            <person name="Wannemuehler Y."/>
            <person name="Mangiamele P."/>
            <person name="Johnson S.J."/>
            <person name="Doetkott C."/>
            <person name="Skyberg J.A."/>
            <person name="Lynne A.M."/>
            <person name="Johnson J.R."/>
            <person name="Nolan L.K."/>
        </authorList>
    </citation>
    <scope>NUCLEOTIDE SEQUENCE [LARGE SCALE GENOMIC DNA]</scope>
</reference>
<organism>
    <name type="scientific">Escherichia coli O1:K1 / APEC</name>
    <dbReference type="NCBI Taxonomy" id="405955"/>
    <lineage>
        <taxon>Bacteria</taxon>
        <taxon>Pseudomonadati</taxon>
        <taxon>Pseudomonadota</taxon>
        <taxon>Gammaproteobacteria</taxon>
        <taxon>Enterobacterales</taxon>
        <taxon>Enterobacteriaceae</taxon>
        <taxon>Escherichia</taxon>
    </lineage>
</organism>